<gene>
    <name evidence="1" type="primary">obg</name>
    <name type="ordered locus">SAV_5469</name>
</gene>
<name>OBG_STRAW</name>
<protein>
    <recommendedName>
        <fullName evidence="1">GTPase Obg</fullName>
        <ecNumber evidence="1">3.6.5.-</ecNumber>
    </recommendedName>
    <alternativeName>
        <fullName evidence="1">GTP-binding protein Obg</fullName>
    </alternativeName>
</protein>
<reference key="1">
    <citation type="journal article" date="2003" name="Nat. Biotechnol.">
        <title>Complete genome sequence and comparative analysis of the industrial microorganism Streptomyces avermitilis.</title>
        <authorList>
            <person name="Ikeda H."/>
            <person name="Ishikawa J."/>
            <person name="Hanamoto A."/>
            <person name="Shinose M."/>
            <person name="Kikuchi H."/>
            <person name="Shiba T."/>
            <person name="Sakaki Y."/>
            <person name="Hattori M."/>
            <person name="Omura S."/>
        </authorList>
    </citation>
    <scope>NUCLEOTIDE SEQUENCE [LARGE SCALE GENOMIC DNA]</scope>
    <source>
        <strain>ATCC 31267 / DSM 46492 / JCM 5070 / NBRC 14893 / NCIMB 12804 / NRRL 8165 / MA-4680</strain>
    </source>
</reference>
<reference key="2">
    <citation type="journal article" date="2001" name="Proc. Natl. Acad. Sci. U.S.A.">
        <title>Genome sequence of an industrial microorganism Streptomyces avermitilis: deducing the ability of producing secondary metabolites.</title>
        <authorList>
            <person name="Omura S."/>
            <person name="Ikeda H."/>
            <person name="Ishikawa J."/>
            <person name="Hanamoto A."/>
            <person name="Takahashi C."/>
            <person name="Shinose M."/>
            <person name="Takahashi Y."/>
            <person name="Horikawa H."/>
            <person name="Nakazawa H."/>
            <person name="Osonoe T."/>
            <person name="Kikuchi H."/>
            <person name="Shiba T."/>
            <person name="Sakaki Y."/>
            <person name="Hattori M."/>
        </authorList>
    </citation>
    <scope>NUCLEOTIDE SEQUENCE [LARGE SCALE GENOMIC DNA]</scope>
    <source>
        <strain>ATCC 31267 / DSM 46492 / JCM 5070 / NBRC 14893 / NCIMB 12804 / NRRL 8165 / MA-4680</strain>
    </source>
</reference>
<dbReference type="EC" id="3.6.5.-" evidence="1"/>
<dbReference type="EMBL" id="BA000030">
    <property type="protein sequence ID" value="BAC73181.1"/>
    <property type="molecule type" value="Genomic_DNA"/>
</dbReference>
<dbReference type="SMR" id="Q82C85"/>
<dbReference type="GeneID" id="41542561"/>
<dbReference type="KEGG" id="sma:SAVERM_5469"/>
<dbReference type="eggNOG" id="COG0536">
    <property type="taxonomic scope" value="Bacteria"/>
</dbReference>
<dbReference type="HOGENOM" id="CLU_011747_1_3_11"/>
<dbReference type="OrthoDB" id="9807318at2"/>
<dbReference type="Proteomes" id="UP000000428">
    <property type="component" value="Chromosome"/>
</dbReference>
<dbReference type="GO" id="GO:0005737">
    <property type="term" value="C:cytoplasm"/>
    <property type="evidence" value="ECO:0007669"/>
    <property type="project" value="UniProtKB-SubCell"/>
</dbReference>
<dbReference type="GO" id="GO:0005525">
    <property type="term" value="F:GTP binding"/>
    <property type="evidence" value="ECO:0007669"/>
    <property type="project" value="UniProtKB-UniRule"/>
</dbReference>
<dbReference type="GO" id="GO:0003924">
    <property type="term" value="F:GTPase activity"/>
    <property type="evidence" value="ECO:0007669"/>
    <property type="project" value="UniProtKB-UniRule"/>
</dbReference>
<dbReference type="GO" id="GO:0000287">
    <property type="term" value="F:magnesium ion binding"/>
    <property type="evidence" value="ECO:0007669"/>
    <property type="project" value="InterPro"/>
</dbReference>
<dbReference type="GO" id="GO:0042254">
    <property type="term" value="P:ribosome biogenesis"/>
    <property type="evidence" value="ECO:0007669"/>
    <property type="project" value="UniProtKB-UniRule"/>
</dbReference>
<dbReference type="CDD" id="cd01898">
    <property type="entry name" value="Obg"/>
    <property type="match status" value="1"/>
</dbReference>
<dbReference type="FunFam" id="2.70.210.12:FF:000001">
    <property type="entry name" value="GTPase Obg"/>
    <property type="match status" value="1"/>
</dbReference>
<dbReference type="Gene3D" id="3.30.300.350">
    <property type="entry name" value="GTP-binding protein OBG, C-terminal domain"/>
    <property type="match status" value="1"/>
</dbReference>
<dbReference type="Gene3D" id="2.70.210.12">
    <property type="entry name" value="GTP1/OBG domain"/>
    <property type="match status" value="1"/>
</dbReference>
<dbReference type="Gene3D" id="3.40.50.300">
    <property type="entry name" value="P-loop containing nucleotide triphosphate hydrolases"/>
    <property type="match status" value="1"/>
</dbReference>
<dbReference type="HAMAP" id="MF_01454">
    <property type="entry name" value="GTPase_Obg"/>
    <property type="match status" value="1"/>
</dbReference>
<dbReference type="InterPro" id="IPR031167">
    <property type="entry name" value="G_OBG"/>
</dbReference>
<dbReference type="InterPro" id="IPR006073">
    <property type="entry name" value="GTP-bd"/>
</dbReference>
<dbReference type="InterPro" id="IPR014100">
    <property type="entry name" value="GTP-bd_Obg/CgtA"/>
</dbReference>
<dbReference type="InterPro" id="IPR036346">
    <property type="entry name" value="GTP-bd_prot_GTP1/OBG_C_sf"/>
</dbReference>
<dbReference type="InterPro" id="IPR006074">
    <property type="entry name" value="GTP1-OBG_CS"/>
</dbReference>
<dbReference type="InterPro" id="IPR006169">
    <property type="entry name" value="GTP1_OBG_dom"/>
</dbReference>
<dbReference type="InterPro" id="IPR036726">
    <property type="entry name" value="GTP1_OBG_dom_sf"/>
</dbReference>
<dbReference type="InterPro" id="IPR045086">
    <property type="entry name" value="OBG_GTPase"/>
</dbReference>
<dbReference type="InterPro" id="IPR015349">
    <property type="entry name" value="OCT_dom"/>
</dbReference>
<dbReference type="InterPro" id="IPR027417">
    <property type="entry name" value="P-loop_NTPase"/>
</dbReference>
<dbReference type="NCBIfam" id="TIGR02729">
    <property type="entry name" value="Obg_CgtA"/>
    <property type="match status" value="1"/>
</dbReference>
<dbReference type="NCBIfam" id="TIGR03595">
    <property type="entry name" value="Obg_CgtA_exten"/>
    <property type="match status" value="1"/>
</dbReference>
<dbReference type="NCBIfam" id="NF008954">
    <property type="entry name" value="PRK12296.1"/>
    <property type="match status" value="1"/>
</dbReference>
<dbReference type="NCBIfam" id="NF008955">
    <property type="entry name" value="PRK12297.1"/>
    <property type="match status" value="1"/>
</dbReference>
<dbReference type="NCBIfam" id="NF008956">
    <property type="entry name" value="PRK12299.1"/>
    <property type="match status" value="1"/>
</dbReference>
<dbReference type="PANTHER" id="PTHR11702">
    <property type="entry name" value="DEVELOPMENTALLY REGULATED GTP-BINDING PROTEIN-RELATED"/>
    <property type="match status" value="1"/>
</dbReference>
<dbReference type="PANTHER" id="PTHR11702:SF31">
    <property type="entry name" value="MITOCHONDRIAL RIBOSOME-ASSOCIATED GTPASE 2"/>
    <property type="match status" value="1"/>
</dbReference>
<dbReference type="Pfam" id="PF09269">
    <property type="entry name" value="DUF1967"/>
    <property type="match status" value="1"/>
</dbReference>
<dbReference type="Pfam" id="PF01018">
    <property type="entry name" value="GTP1_OBG"/>
    <property type="match status" value="1"/>
</dbReference>
<dbReference type="Pfam" id="PF01926">
    <property type="entry name" value="MMR_HSR1"/>
    <property type="match status" value="1"/>
</dbReference>
<dbReference type="PRINTS" id="PR00326">
    <property type="entry name" value="GTP1OBG"/>
</dbReference>
<dbReference type="SUPFAM" id="SSF102741">
    <property type="entry name" value="Obg GTP-binding protein C-terminal domain"/>
    <property type="match status" value="1"/>
</dbReference>
<dbReference type="SUPFAM" id="SSF82051">
    <property type="entry name" value="Obg GTP-binding protein N-terminal domain"/>
    <property type="match status" value="1"/>
</dbReference>
<dbReference type="SUPFAM" id="SSF52540">
    <property type="entry name" value="P-loop containing nucleoside triphosphate hydrolases"/>
    <property type="match status" value="1"/>
</dbReference>
<dbReference type="PROSITE" id="PS51710">
    <property type="entry name" value="G_OBG"/>
    <property type="match status" value="1"/>
</dbReference>
<dbReference type="PROSITE" id="PS00905">
    <property type="entry name" value="GTP1_OBG"/>
    <property type="match status" value="1"/>
</dbReference>
<dbReference type="PROSITE" id="PS51883">
    <property type="entry name" value="OBG"/>
    <property type="match status" value="1"/>
</dbReference>
<dbReference type="PROSITE" id="PS51881">
    <property type="entry name" value="OCT"/>
    <property type="match status" value="1"/>
</dbReference>
<sequence length="479" mass="51071">MTTFVDRVELHVAAGSGGHGCASVHREKFKPLGGPDGGNGGRGGDVILVVDQSVTTLLDYHHKPHRSATNGKPGEGGNRSGKDGQDLILPVPDGTVIQDKAGNVLADLVGHGTSYVAAQGGRGGLGNAALASARRKAPGFALLGEPGDFQDIVLELKTVADVALVGYPSAGKSSLISVLSAAKPKIADYPFTTLVPNLGVVTAGSTVYTIADVPGLIPGASQGKGLGLEFLRHVERCSVLVHVLDTATLESDRDPVSDLDIIEEELTQYGGGLNNRPRMVVLNKIDVPDGKDLAEMVRPELEARGYRVFEVSAVAHMGLKELSFALAELVGAARAAKPKEEATRIVIRPKAVDDAGFTVVLEEDGLYRVRGEKPERWVRQTDFNNDEAVGYLADRLNRLGVETELMKAGARAGDGVAIGPEDNAVVFDWEPTVMAGAEMLGRRGEDHRLDEPRPAAQRRRDKQAERDDAEKEYDDFEPF</sequence>
<proteinExistence type="inferred from homology"/>
<accession>Q82C85</accession>
<comment type="function">
    <text evidence="1">An essential GTPase which binds GTP, GDP and possibly (p)ppGpp with moderate affinity, with high nucleotide exchange rates and a fairly low GTP hydrolysis rate. Plays a role in control of the cell cycle, stress response, ribosome biogenesis and in those bacteria that undergo differentiation, in morphogenesis control.</text>
</comment>
<comment type="cofactor">
    <cofactor evidence="1">
        <name>Mg(2+)</name>
        <dbReference type="ChEBI" id="CHEBI:18420"/>
    </cofactor>
</comment>
<comment type="subunit">
    <text evidence="1">Monomer.</text>
</comment>
<comment type="subcellular location">
    <subcellularLocation>
        <location evidence="1">Cytoplasm</location>
    </subcellularLocation>
</comment>
<comment type="similarity">
    <text evidence="1">Belongs to the TRAFAC class OBG-HflX-like GTPase superfamily. OBG GTPase family.</text>
</comment>
<keyword id="KW-0963">Cytoplasm</keyword>
<keyword id="KW-0342">GTP-binding</keyword>
<keyword id="KW-0378">Hydrolase</keyword>
<keyword id="KW-0460">Magnesium</keyword>
<keyword id="KW-0479">Metal-binding</keyword>
<keyword id="KW-0547">Nucleotide-binding</keyword>
<keyword id="KW-1185">Reference proteome</keyword>
<feature type="chain" id="PRO_0000386322" description="GTPase Obg">
    <location>
        <begin position="1"/>
        <end position="479"/>
    </location>
</feature>
<feature type="domain" description="Obg" evidence="3">
    <location>
        <begin position="2"/>
        <end position="159"/>
    </location>
</feature>
<feature type="domain" description="OBG-type G" evidence="1">
    <location>
        <begin position="160"/>
        <end position="331"/>
    </location>
</feature>
<feature type="domain" description="OCT" evidence="2">
    <location>
        <begin position="349"/>
        <end position="431"/>
    </location>
</feature>
<feature type="region of interest" description="Disordered" evidence="4">
    <location>
        <begin position="61"/>
        <end position="87"/>
    </location>
</feature>
<feature type="region of interest" description="Disordered" evidence="4">
    <location>
        <begin position="440"/>
        <end position="479"/>
    </location>
</feature>
<feature type="compositionally biased region" description="Basic and acidic residues" evidence="4">
    <location>
        <begin position="440"/>
        <end position="453"/>
    </location>
</feature>
<feature type="compositionally biased region" description="Acidic residues" evidence="4">
    <location>
        <begin position="470"/>
        <end position="479"/>
    </location>
</feature>
<feature type="binding site" evidence="1">
    <location>
        <begin position="166"/>
        <end position="173"/>
    </location>
    <ligand>
        <name>GTP</name>
        <dbReference type="ChEBI" id="CHEBI:37565"/>
    </ligand>
</feature>
<feature type="binding site" evidence="1">
    <location>
        <position position="173"/>
    </location>
    <ligand>
        <name>Mg(2+)</name>
        <dbReference type="ChEBI" id="CHEBI:18420"/>
    </ligand>
</feature>
<feature type="binding site" evidence="1">
    <location>
        <begin position="191"/>
        <end position="195"/>
    </location>
    <ligand>
        <name>GTP</name>
        <dbReference type="ChEBI" id="CHEBI:37565"/>
    </ligand>
</feature>
<feature type="binding site" evidence="1">
    <location>
        <position position="193"/>
    </location>
    <ligand>
        <name>Mg(2+)</name>
        <dbReference type="ChEBI" id="CHEBI:18420"/>
    </ligand>
</feature>
<feature type="binding site" evidence="1">
    <location>
        <begin position="212"/>
        <end position="215"/>
    </location>
    <ligand>
        <name>GTP</name>
        <dbReference type="ChEBI" id="CHEBI:37565"/>
    </ligand>
</feature>
<feature type="binding site" evidence="1">
    <location>
        <begin position="283"/>
        <end position="286"/>
    </location>
    <ligand>
        <name>GTP</name>
        <dbReference type="ChEBI" id="CHEBI:37565"/>
    </ligand>
</feature>
<feature type="binding site" evidence="1">
    <location>
        <begin position="312"/>
        <end position="314"/>
    </location>
    <ligand>
        <name>GTP</name>
        <dbReference type="ChEBI" id="CHEBI:37565"/>
    </ligand>
</feature>
<organism>
    <name type="scientific">Streptomyces avermitilis (strain ATCC 31267 / DSM 46492 / JCM 5070 / NBRC 14893 / NCIMB 12804 / NRRL 8165 / MA-4680)</name>
    <dbReference type="NCBI Taxonomy" id="227882"/>
    <lineage>
        <taxon>Bacteria</taxon>
        <taxon>Bacillati</taxon>
        <taxon>Actinomycetota</taxon>
        <taxon>Actinomycetes</taxon>
        <taxon>Kitasatosporales</taxon>
        <taxon>Streptomycetaceae</taxon>
        <taxon>Streptomyces</taxon>
    </lineage>
</organism>
<evidence type="ECO:0000255" key="1">
    <source>
        <dbReference type="HAMAP-Rule" id="MF_01454"/>
    </source>
</evidence>
<evidence type="ECO:0000255" key="2">
    <source>
        <dbReference type="PROSITE-ProRule" id="PRU01229"/>
    </source>
</evidence>
<evidence type="ECO:0000255" key="3">
    <source>
        <dbReference type="PROSITE-ProRule" id="PRU01231"/>
    </source>
</evidence>
<evidence type="ECO:0000256" key="4">
    <source>
        <dbReference type="SAM" id="MobiDB-lite"/>
    </source>
</evidence>